<keyword id="KW-0067">ATP-binding</keyword>
<keyword id="KW-0963">Cytoplasm</keyword>
<keyword id="KW-0227">DNA damage</keyword>
<keyword id="KW-0233">DNA recombination</keyword>
<keyword id="KW-0234">DNA repair</keyword>
<keyword id="KW-0238">DNA-binding</keyword>
<keyword id="KW-0547">Nucleotide-binding</keyword>
<keyword id="KW-0742">SOS response</keyword>
<gene>
    <name evidence="1" type="primary">recA</name>
    <name type="ordered locus">M446_0291</name>
</gene>
<dbReference type="EMBL" id="CP000943">
    <property type="protein sequence ID" value="ACA14862.1"/>
    <property type="molecule type" value="Genomic_DNA"/>
</dbReference>
<dbReference type="RefSeq" id="WP_012330280.1">
    <property type="nucleotide sequence ID" value="NC_010511.1"/>
</dbReference>
<dbReference type="SMR" id="B0UGP0"/>
<dbReference type="STRING" id="426117.M446_0291"/>
<dbReference type="KEGG" id="met:M446_0291"/>
<dbReference type="eggNOG" id="COG0468">
    <property type="taxonomic scope" value="Bacteria"/>
</dbReference>
<dbReference type="HOGENOM" id="CLU_040469_3_2_5"/>
<dbReference type="GO" id="GO:0005829">
    <property type="term" value="C:cytosol"/>
    <property type="evidence" value="ECO:0007669"/>
    <property type="project" value="TreeGrafter"/>
</dbReference>
<dbReference type="GO" id="GO:0005524">
    <property type="term" value="F:ATP binding"/>
    <property type="evidence" value="ECO:0007669"/>
    <property type="project" value="UniProtKB-UniRule"/>
</dbReference>
<dbReference type="GO" id="GO:0016887">
    <property type="term" value="F:ATP hydrolysis activity"/>
    <property type="evidence" value="ECO:0007669"/>
    <property type="project" value="InterPro"/>
</dbReference>
<dbReference type="GO" id="GO:0140664">
    <property type="term" value="F:ATP-dependent DNA damage sensor activity"/>
    <property type="evidence" value="ECO:0007669"/>
    <property type="project" value="InterPro"/>
</dbReference>
<dbReference type="GO" id="GO:0003684">
    <property type="term" value="F:damaged DNA binding"/>
    <property type="evidence" value="ECO:0007669"/>
    <property type="project" value="UniProtKB-UniRule"/>
</dbReference>
<dbReference type="GO" id="GO:0003697">
    <property type="term" value="F:single-stranded DNA binding"/>
    <property type="evidence" value="ECO:0007669"/>
    <property type="project" value="UniProtKB-UniRule"/>
</dbReference>
<dbReference type="GO" id="GO:0006310">
    <property type="term" value="P:DNA recombination"/>
    <property type="evidence" value="ECO:0007669"/>
    <property type="project" value="UniProtKB-UniRule"/>
</dbReference>
<dbReference type="GO" id="GO:0006281">
    <property type="term" value="P:DNA repair"/>
    <property type="evidence" value="ECO:0007669"/>
    <property type="project" value="UniProtKB-UniRule"/>
</dbReference>
<dbReference type="GO" id="GO:0009432">
    <property type="term" value="P:SOS response"/>
    <property type="evidence" value="ECO:0007669"/>
    <property type="project" value="UniProtKB-UniRule"/>
</dbReference>
<dbReference type="CDD" id="cd00983">
    <property type="entry name" value="RecA"/>
    <property type="match status" value="1"/>
</dbReference>
<dbReference type="FunFam" id="3.40.50.300:FF:000087">
    <property type="entry name" value="Recombinase RecA"/>
    <property type="match status" value="1"/>
</dbReference>
<dbReference type="Gene3D" id="3.40.50.300">
    <property type="entry name" value="P-loop containing nucleotide triphosphate hydrolases"/>
    <property type="match status" value="1"/>
</dbReference>
<dbReference type="HAMAP" id="MF_00268">
    <property type="entry name" value="RecA"/>
    <property type="match status" value="1"/>
</dbReference>
<dbReference type="InterPro" id="IPR003593">
    <property type="entry name" value="AAA+_ATPase"/>
</dbReference>
<dbReference type="InterPro" id="IPR013765">
    <property type="entry name" value="DNA_recomb/repair_RecA"/>
</dbReference>
<dbReference type="InterPro" id="IPR020584">
    <property type="entry name" value="DNA_recomb/repair_RecA_CS"/>
</dbReference>
<dbReference type="InterPro" id="IPR027417">
    <property type="entry name" value="P-loop_NTPase"/>
</dbReference>
<dbReference type="InterPro" id="IPR049261">
    <property type="entry name" value="RecA-like_C"/>
</dbReference>
<dbReference type="InterPro" id="IPR049428">
    <property type="entry name" value="RecA-like_N"/>
</dbReference>
<dbReference type="InterPro" id="IPR020588">
    <property type="entry name" value="RecA_ATP-bd"/>
</dbReference>
<dbReference type="InterPro" id="IPR023400">
    <property type="entry name" value="RecA_C_sf"/>
</dbReference>
<dbReference type="InterPro" id="IPR020587">
    <property type="entry name" value="RecA_monomer-monomer_interface"/>
</dbReference>
<dbReference type="NCBIfam" id="TIGR02012">
    <property type="entry name" value="tigrfam_recA"/>
    <property type="match status" value="1"/>
</dbReference>
<dbReference type="PANTHER" id="PTHR45900:SF1">
    <property type="entry name" value="MITOCHONDRIAL DNA REPAIR PROTEIN RECA HOMOLOG-RELATED"/>
    <property type="match status" value="1"/>
</dbReference>
<dbReference type="PANTHER" id="PTHR45900">
    <property type="entry name" value="RECA"/>
    <property type="match status" value="1"/>
</dbReference>
<dbReference type="Pfam" id="PF00154">
    <property type="entry name" value="RecA"/>
    <property type="match status" value="1"/>
</dbReference>
<dbReference type="Pfam" id="PF21096">
    <property type="entry name" value="RecA_C"/>
    <property type="match status" value="1"/>
</dbReference>
<dbReference type="PRINTS" id="PR00142">
    <property type="entry name" value="RECA"/>
</dbReference>
<dbReference type="SMART" id="SM00382">
    <property type="entry name" value="AAA"/>
    <property type="match status" value="1"/>
</dbReference>
<dbReference type="SUPFAM" id="SSF52540">
    <property type="entry name" value="P-loop containing nucleoside triphosphate hydrolases"/>
    <property type="match status" value="1"/>
</dbReference>
<dbReference type="SUPFAM" id="SSF54752">
    <property type="entry name" value="RecA protein, C-terminal domain"/>
    <property type="match status" value="1"/>
</dbReference>
<dbReference type="PROSITE" id="PS00321">
    <property type="entry name" value="RECA_1"/>
    <property type="match status" value="1"/>
</dbReference>
<dbReference type="PROSITE" id="PS50162">
    <property type="entry name" value="RECA_2"/>
    <property type="match status" value="1"/>
</dbReference>
<dbReference type="PROSITE" id="PS50163">
    <property type="entry name" value="RECA_3"/>
    <property type="match status" value="1"/>
</dbReference>
<name>RECA_METS4</name>
<protein>
    <recommendedName>
        <fullName evidence="1">Protein RecA</fullName>
    </recommendedName>
    <alternativeName>
        <fullName evidence="1">Recombinase A</fullName>
    </alternativeName>
</protein>
<feature type="chain" id="PRO_1000114347" description="Protein RecA">
    <location>
        <begin position="1"/>
        <end position="363"/>
    </location>
</feature>
<feature type="binding site" evidence="1">
    <location>
        <begin position="79"/>
        <end position="86"/>
    </location>
    <ligand>
        <name>ATP</name>
        <dbReference type="ChEBI" id="CHEBI:30616"/>
    </ligand>
</feature>
<sequence>MAQSSLRLVENPTMDKDKSKAIDAALAQIERAFGKGSIMRLGKGDKVQEVETISTGSLGLDVALGVGGLPRGRVIEIYGPESSGKTTLALHTIAEAQKKGGVCAFVDAEHALDPVYARKLGVNLDDLLISQPDTGEQALEITDTLVRSGAIDVLVVDSVAALTPRAEIEGEMGDQQPGLQARLMSQALRKLTGSISRSNCMVIFINQIRMKIGVMYGSPETTTGGNALKFYASVRLDIRRVSTLKDRDEPIGNSVRVKVVKNKVAPPFKQVEFDIMFGEGVSKVGELIDLGVKAGIVEKSGAWFSYDSQRLGQGRENAKGFLRDNPDIAGRIEAAIRQNMGLVADKILENAVPTAEDFDEGEA</sequence>
<accession>B0UGP0</accession>
<proteinExistence type="inferred from homology"/>
<organism>
    <name type="scientific">Methylobacterium sp. (strain 4-46)</name>
    <dbReference type="NCBI Taxonomy" id="426117"/>
    <lineage>
        <taxon>Bacteria</taxon>
        <taxon>Pseudomonadati</taxon>
        <taxon>Pseudomonadota</taxon>
        <taxon>Alphaproteobacteria</taxon>
        <taxon>Hyphomicrobiales</taxon>
        <taxon>Methylobacteriaceae</taxon>
        <taxon>Methylobacterium</taxon>
    </lineage>
</organism>
<evidence type="ECO:0000255" key="1">
    <source>
        <dbReference type="HAMAP-Rule" id="MF_00268"/>
    </source>
</evidence>
<comment type="function">
    <text evidence="1">Can catalyze the hydrolysis of ATP in the presence of single-stranded DNA, the ATP-dependent uptake of single-stranded DNA by duplex DNA, and the ATP-dependent hybridization of homologous single-stranded DNAs. It interacts with LexA causing its activation and leading to its autocatalytic cleavage.</text>
</comment>
<comment type="subcellular location">
    <subcellularLocation>
        <location evidence="1">Cytoplasm</location>
    </subcellularLocation>
</comment>
<comment type="similarity">
    <text evidence="1">Belongs to the RecA family.</text>
</comment>
<reference key="1">
    <citation type="submission" date="2008-02" db="EMBL/GenBank/DDBJ databases">
        <title>Complete sequence of chromosome of Methylobacterium sp. 4-46.</title>
        <authorList>
            <consortium name="US DOE Joint Genome Institute"/>
            <person name="Copeland A."/>
            <person name="Lucas S."/>
            <person name="Lapidus A."/>
            <person name="Glavina del Rio T."/>
            <person name="Dalin E."/>
            <person name="Tice H."/>
            <person name="Bruce D."/>
            <person name="Goodwin L."/>
            <person name="Pitluck S."/>
            <person name="Chertkov O."/>
            <person name="Brettin T."/>
            <person name="Detter J.C."/>
            <person name="Han C."/>
            <person name="Kuske C.R."/>
            <person name="Schmutz J."/>
            <person name="Larimer F."/>
            <person name="Land M."/>
            <person name="Hauser L."/>
            <person name="Kyrpides N."/>
            <person name="Ivanova N."/>
            <person name="Marx C.J."/>
            <person name="Richardson P."/>
        </authorList>
    </citation>
    <scope>NUCLEOTIDE SEQUENCE [LARGE SCALE GENOMIC DNA]</scope>
    <source>
        <strain>4-46</strain>
    </source>
</reference>